<gene>
    <name type="primary">Entpd6</name>
    <name type="synonym">Cd39l2</name>
</gene>
<evidence type="ECO:0000250" key="1">
    <source>
        <dbReference type="UniProtKB" id="O35795"/>
    </source>
</evidence>
<evidence type="ECO:0000250" key="2">
    <source>
        <dbReference type="UniProtKB" id="O75354"/>
    </source>
</evidence>
<evidence type="ECO:0000255" key="3"/>
<evidence type="ECO:0000269" key="4">
    <source>
    </source>
</evidence>
<evidence type="ECO:0000305" key="5"/>
<sequence length="455" mass="49899">MRKIPNHGTLRMTKVAYPLGLCVGLFIYVAYIKWHRASAAQAFFTIAGAASGVRWTQQAFSSPDSATRGHEVFYGIMFDAGSTGTRIHVFQFARPPGETPTLTHETFKALKPGLSAYADDVEKSAQGIQELLNVAKQHIPYDFWKATPLVLKATAGLRLLPGEKAQKLLQKVKEVFKASPFLVGDDCVSIMNGTDEGVSAWITVNFLTGSLKTPGSSSVGMLDLGGGSTQITFLPRVEGTLQASPPGHLTALQMFNRTFKLYSYSYLGLGLMSARLAILGGVEGKPAEDDKELVSPCLSPRFRGKWEHAEVTYRISGQKAVGLYELCASRVSEVLRNKVHRTEEAQHVDFYAFSYYYDLAASFGLIDAEKGGSLVVGDFEIAAKYVCRTLETQPPSSPFACMDLTYISLLLHEFGFPGDKVLKLARKIDNVETSWALGAIFHYIDSLKRQKVPAL</sequence>
<organism>
    <name type="scientific">Rattus norvegicus</name>
    <name type="common">Rat</name>
    <dbReference type="NCBI Taxonomy" id="10116"/>
    <lineage>
        <taxon>Eukaryota</taxon>
        <taxon>Metazoa</taxon>
        <taxon>Chordata</taxon>
        <taxon>Craniata</taxon>
        <taxon>Vertebrata</taxon>
        <taxon>Euteleostomi</taxon>
        <taxon>Mammalia</taxon>
        <taxon>Eutheria</taxon>
        <taxon>Euarchontoglires</taxon>
        <taxon>Glires</taxon>
        <taxon>Rodentia</taxon>
        <taxon>Myomorpha</taxon>
        <taxon>Muroidea</taxon>
        <taxon>Muridae</taxon>
        <taxon>Murinae</taxon>
        <taxon>Rattus</taxon>
    </lineage>
</organism>
<dbReference type="EC" id="3.6.1.6" evidence="4"/>
<dbReference type="EMBL" id="AJ277748">
    <property type="protein sequence ID" value="CAC16598.1"/>
    <property type="molecule type" value="mRNA"/>
</dbReference>
<dbReference type="RefSeq" id="NP_001416444.1">
    <property type="nucleotide sequence ID" value="NM_001429515.1"/>
</dbReference>
<dbReference type="RefSeq" id="NP_445950.1">
    <property type="nucleotide sequence ID" value="NM_053498.1"/>
</dbReference>
<dbReference type="RefSeq" id="XP_006235280.1">
    <property type="nucleotide sequence ID" value="XM_006235218.3"/>
</dbReference>
<dbReference type="SMR" id="Q9ER31"/>
<dbReference type="FunCoup" id="Q9ER31">
    <property type="interactions" value="2672"/>
</dbReference>
<dbReference type="STRING" id="10116.ENSRNOP00000009946"/>
<dbReference type="GlyCosmos" id="Q9ER31">
    <property type="glycosylation" value="2 sites, No reported glycans"/>
</dbReference>
<dbReference type="GlyGen" id="Q9ER31">
    <property type="glycosylation" value="2 sites"/>
</dbReference>
<dbReference type="PhosphoSitePlus" id="Q9ER31"/>
<dbReference type="PaxDb" id="10116-ENSRNOP00000009946"/>
<dbReference type="Ensembl" id="ENSRNOT00000009946.6">
    <property type="protein sequence ID" value="ENSRNOP00000009946.3"/>
    <property type="gene ID" value="ENSRNOG00000007427.6"/>
</dbReference>
<dbReference type="GeneID" id="85260"/>
<dbReference type="KEGG" id="rno:85260"/>
<dbReference type="UCSC" id="RGD:619725">
    <property type="organism name" value="rat"/>
</dbReference>
<dbReference type="AGR" id="RGD:619725"/>
<dbReference type="CTD" id="955"/>
<dbReference type="RGD" id="619725">
    <property type="gene designation" value="Entpd6"/>
</dbReference>
<dbReference type="eggNOG" id="KOG1385">
    <property type="taxonomic scope" value="Eukaryota"/>
</dbReference>
<dbReference type="GeneTree" id="ENSGT01110000267162"/>
<dbReference type="HOGENOM" id="CLU_010246_0_2_1"/>
<dbReference type="InParanoid" id="Q9ER31"/>
<dbReference type="OMA" id="CLVENMN"/>
<dbReference type="OrthoDB" id="6372431at2759"/>
<dbReference type="PhylomeDB" id="Q9ER31"/>
<dbReference type="TreeFam" id="TF315029"/>
<dbReference type="Reactome" id="R-RNO-8850843">
    <property type="pathway name" value="Phosphate bond hydrolysis by NTPDase proteins"/>
</dbReference>
<dbReference type="PRO" id="PR:Q9ER31"/>
<dbReference type="Proteomes" id="UP000002494">
    <property type="component" value="Chromosome 3"/>
</dbReference>
<dbReference type="Bgee" id="ENSRNOG00000007427">
    <property type="expression patterns" value="Expressed in frontal cortex and 20 other cell types or tissues"/>
</dbReference>
<dbReference type="GO" id="GO:0009986">
    <property type="term" value="C:cell surface"/>
    <property type="evidence" value="ECO:0000314"/>
    <property type="project" value="RGD"/>
</dbReference>
<dbReference type="GO" id="GO:0005576">
    <property type="term" value="C:extracellular region"/>
    <property type="evidence" value="ECO:0000266"/>
    <property type="project" value="RGD"/>
</dbReference>
<dbReference type="GO" id="GO:0005615">
    <property type="term" value="C:extracellular space"/>
    <property type="evidence" value="ECO:0000314"/>
    <property type="project" value="RGD"/>
</dbReference>
<dbReference type="GO" id="GO:0005794">
    <property type="term" value="C:Golgi apparatus"/>
    <property type="evidence" value="ECO:0000318"/>
    <property type="project" value="GO_Central"/>
</dbReference>
<dbReference type="GO" id="GO:0000139">
    <property type="term" value="C:Golgi membrane"/>
    <property type="evidence" value="ECO:0007669"/>
    <property type="project" value="UniProtKB-SubCell"/>
</dbReference>
<dbReference type="GO" id="GO:0005886">
    <property type="term" value="C:plasma membrane"/>
    <property type="evidence" value="ECO:0000266"/>
    <property type="project" value="RGD"/>
</dbReference>
<dbReference type="GO" id="GO:0036384">
    <property type="term" value="F:CDP phosphatase activity"/>
    <property type="evidence" value="ECO:0000314"/>
    <property type="project" value="UniProtKB"/>
</dbReference>
<dbReference type="GO" id="GO:0004382">
    <property type="term" value="F:GDP phosphatase activity"/>
    <property type="evidence" value="ECO:0000314"/>
    <property type="project" value="UniProtKB"/>
</dbReference>
<dbReference type="GO" id="GO:0008894">
    <property type="term" value="F:guanosine-5'-triphosphate,3'-diphosphate diphosphatase activity"/>
    <property type="evidence" value="ECO:0000314"/>
    <property type="project" value="RGD"/>
</dbReference>
<dbReference type="GO" id="GO:1990003">
    <property type="term" value="F:IDP phosphatase activity"/>
    <property type="evidence" value="ECO:0000314"/>
    <property type="project" value="UniProtKB"/>
</dbReference>
<dbReference type="GO" id="GO:0017110">
    <property type="term" value="F:nucleoside diphosphate phosphatase activity"/>
    <property type="evidence" value="ECO:0000314"/>
    <property type="project" value="RGD"/>
</dbReference>
<dbReference type="GO" id="GO:0017111">
    <property type="term" value="F:ribonucleoside triphosphate phosphatase activity"/>
    <property type="evidence" value="ECO:0000314"/>
    <property type="project" value="RGD"/>
</dbReference>
<dbReference type="GO" id="GO:0045134">
    <property type="term" value="F:UDP phosphatase activity"/>
    <property type="evidence" value="ECO:0000314"/>
    <property type="project" value="UniProtKB"/>
</dbReference>
<dbReference type="GO" id="GO:0051592">
    <property type="term" value="P:response to calcium ion"/>
    <property type="evidence" value="ECO:0000314"/>
    <property type="project" value="RGD"/>
</dbReference>
<dbReference type="GO" id="GO:0032026">
    <property type="term" value="P:response to magnesium ion"/>
    <property type="evidence" value="ECO:0000314"/>
    <property type="project" value="RGD"/>
</dbReference>
<dbReference type="CDD" id="cd24115">
    <property type="entry name" value="ASKHA_NBD_NTPDase6"/>
    <property type="match status" value="1"/>
</dbReference>
<dbReference type="FunFam" id="3.30.420.40:FF:000052">
    <property type="entry name" value="Ectonucleoside triphosphate diphosphohydrolase 5"/>
    <property type="match status" value="1"/>
</dbReference>
<dbReference type="FunFam" id="3.30.420.150:FF:000014">
    <property type="entry name" value="Ectonucleoside triphosphate diphosphohydrolase 6"/>
    <property type="match status" value="1"/>
</dbReference>
<dbReference type="Gene3D" id="3.30.420.40">
    <property type="match status" value="1"/>
</dbReference>
<dbReference type="Gene3D" id="3.30.420.150">
    <property type="entry name" value="Exopolyphosphatase. Domain 2"/>
    <property type="match status" value="1"/>
</dbReference>
<dbReference type="InterPro" id="IPR000407">
    <property type="entry name" value="GDA1_CD39_NTPase"/>
</dbReference>
<dbReference type="PANTHER" id="PTHR11782">
    <property type="entry name" value="ADENOSINE/GUANOSINE DIPHOSPHATASE"/>
    <property type="match status" value="1"/>
</dbReference>
<dbReference type="PANTHER" id="PTHR11782:SF99">
    <property type="entry name" value="ECTONUCLEOSIDE TRIPHOSPHATE DIPHOSPHOHYDROLASE 6"/>
    <property type="match status" value="1"/>
</dbReference>
<dbReference type="Pfam" id="PF01150">
    <property type="entry name" value="GDA1_CD39"/>
    <property type="match status" value="1"/>
</dbReference>
<dbReference type="PROSITE" id="PS01238">
    <property type="entry name" value="GDA1_CD39_NTPASE"/>
    <property type="match status" value="1"/>
</dbReference>
<reference key="1">
    <citation type="journal article" date="2000" name="Biochem. J.">
        <title>Sequencing, functional expression and characterization of rat NTPDase6, a nucleoside diphosphatase and novel member of the ecto-nucleoside triphosphate diphosphohydrolase family.</title>
        <authorList>
            <person name="Braun N."/>
            <person name="Fengler S."/>
            <person name="Ebeling C."/>
            <person name="Servos J."/>
            <person name="Zimmermann H."/>
        </authorList>
    </citation>
    <scope>NUCLEOTIDE SEQUENCE [MRNA]</scope>
    <scope>SUBCELLULAR LOCATION</scope>
    <scope>CATALYTIC ACTIVITY</scope>
    <scope>FUNCTION</scope>
    <scope>TISSUE SPECIFICITY</scope>
    <scope>BIOPHYSICOCHEMICAL PROPERTIES</scope>
    <scope>COFACTOR</scope>
    <source>
        <strain>Sprague-Dawley</strain>
        <tissue>Brain</tissue>
    </source>
</reference>
<protein>
    <recommendedName>
        <fullName>Ectonucleoside triphosphate diphosphohydrolase 6</fullName>
        <shortName>NTPDase 6</shortName>
        <ecNumber evidence="4">3.6.1.6</ecNumber>
    </recommendedName>
    <alternativeName>
        <fullName>CD39 antigen-like 2</fullName>
    </alternativeName>
</protein>
<comment type="function">
    <text evidence="4">Catalyzes the hydrolysis of nucleoside triphosphates and diphosphates in a calcium- or magnesium-dependent manner. Has a strong preference for nucleoside diphosphates, preferentially hydrolyzes GDP, IDP, and UDP, with slower hydrolysis of CDP, ITP, GTP, CTP, ADP, and UTP and virtually no hydrolysis of ATP (PubMed:11042118). The membrane bound form might support glycosylation reactions in the Golgi apparatus and, when released from cells, might catalyze the hydrolysis of extracellular nucleotides (PubMed:11042118).</text>
</comment>
<comment type="catalytic activity">
    <reaction evidence="4">
        <text>a ribonucleoside 5'-diphosphate + H2O = a ribonucleoside 5'-phosphate + phosphate + H(+)</text>
        <dbReference type="Rhea" id="RHEA:36799"/>
        <dbReference type="ChEBI" id="CHEBI:15377"/>
        <dbReference type="ChEBI" id="CHEBI:15378"/>
        <dbReference type="ChEBI" id="CHEBI:43474"/>
        <dbReference type="ChEBI" id="CHEBI:57930"/>
        <dbReference type="ChEBI" id="CHEBI:58043"/>
        <dbReference type="EC" id="3.6.1.6"/>
    </reaction>
</comment>
<comment type="catalytic activity">
    <reaction evidence="4">
        <text>IDP + H2O = IMP + phosphate + H(+)</text>
        <dbReference type="Rhea" id="RHEA:35207"/>
        <dbReference type="ChEBI" id="CHEBI:15377"/>
        <dbReference type="ChEBI" id="CHEBI:15378"/>
        <dbReference type="ChEBI" id="CHEBI:43474"/>
        <dbReference type="ChEBI" id="CHEBI:58053"/>
        <dbReference type="ChEBI" id="CHEBI:58280"/>
        <dbReference type="EC" id="3.6.1.6"/>
    </reaction>
</comment>
<comment type="catalytic activity">
    <reaction evidence="4">
        <text>GDP + H2O = GMP + phosphate + H(+)</text>
        <dbReference type="Rhea" id="RHEA:22156"/>
        <dbReference type="ChEBI" id="CHEBI:15377"/>
        <dbReference type="ChEBI" id="CHEBI:15378"/>
        <dbReference type="ChEBI" id="CHEBI:43474"/>
        <dbReference type="ChEBI" id="CHEBI:58115"/>
        <dbReference type="ChEBI" id="CHEBI:58189"/>
        <dbReference type="EC" id="3.6.1.6"/>
    </reaction>
</comment>
<comment type="catalytic activity">
    <reaction evidence="4">
        <text>UDP + H2O = UMP + phosphate + H(+)</text>
        <dbReference type="Rhea" id="RHEA:64876"/>
        <dbReference type="ChEBI" id="CHEBI:15377"/>
        <dbReference type="ChEBI" id="CHEBI:15378"/>
        <dbReference type="ChEBI" id="CHEBI:43474"/>
        <dbReference type="ChEBI" id="CHEBI:57865"/>
        <dbReference type="ChEBI" id="CHEBI:58223"/>
        <dbReference type="EC" id="3.6.1.6"/>
    </reaction>
</comment>
<comment type="cofactor">
    <cofactor evidence="4">
        <name>Ca(2+)</name>
        <dbReference type="ChEBI" id="CHEBI:29108"/>
    </cofactor>
    <cofactor evidence="4">
        <name>Mg(2+)</name>
        <dbReference type="ChEBI" id="CHEBI:18420"/>
    </cofactor>
    <text evidence="4">Strongly and equally activated by either Ca(2+) or Mg(2+).</text>
</comment>
<comment type="biophysicochemical properties">
    <kinetics>
        <KM evidence="4">211 uM for GDP</KM>
    </kinetics>
</comment>
<comment type="subcellular location">
    <subcellularLocation>
        <location evidence="4">Golgi apparatus membrane</location>
        <topology evidence="3">Single-pass type II membrane protein</topology>
    </subcellularLocation>
    <subcellularLocation>
        <location evidence="4">Secreted</location>
    </subcellularLocation>
    <subcellularLocation>
        <location evidence="4">Cell membrane</location>
        <topology evidence="3">Single-pass type II membrane protein</topology>
    </subcellularLocation>
    <text evidence="4">Exists as a secreted and membrane-bound forms in the medium of transfected cells, the secreted form is predominant.</text>
</comment>
<comment type="tissue specificity">
    <text evidence="4">Expressed in heart and brain.</text>
</comment>
<comment type="PTM">
    <text evidence="4">Might be cleaved at the N-terminus, retained in an intracellular membrane compartment and in addition be released into the extracellular medium.</text>
</comment>
<comment type="PTM">
    <text evidence="2">N-glycosylated.</text>
</comment>
<comment type="similarity">
    <text evidence="5">Belongs to the GDA1/CD39 NTPase family.</text>
</comment>
<keyword id="KW-0106">Calcium</keyword>
<keyword id="KW-1003">Cell membrane</keyword>
<keyword id="KW-1015">Disulfide bond</keyword>
<keyword id="KW-0325">Glycoprotein</keyword>
<keyword id="KW-0333">Golgi apparatus</keyword>
<keyword id="KW-0378">Hydrolase</keyword>
<keyword id="KW-0460">Magnesium</keyword>
<keyword id="KW-0472">Membrane</keyword>
<keyword id="KW-1185">Reference proteome</keyword>
<keyword id="KW-0964">Secreted</keyword>
<keyword id="KW-0735">Signal-anchor</keyword>
<keyword id="KW-0812">Transmembrane</keyword>
<keyword id="KW-1133">Transmembrane helix</keyword>
<proteinExistence type="evidence at protein level"/>
<name>ENTP6_RAT</name>
<feature type="chain" id="PRO_0000209914" description="Ectonucleoside triphosphate diphosphohydrolase 6">
    <location>
        <begin position="1"/>
        <end position="455"/>
    </location>
</feature>
<feature type="topological domain" description="Cytoplasmic" evidence="3">
    <location>
        <begin position="1"/>
        <end position="12"/>
    </location>
</feature>
<feature type="transmembrane region" description="Helical; Signal-anchor for type II membrane protein" evidence="3">
    <location>
        <begin position="13"/>
        <end position="32"/>
    </location>
</feature>
<feature type="topological domain" description="Lumenal" evidence="3">
    <location>
        <begin position="33"/>
        <end position="455"/>
    </location>
</feature>
<feature type="active site" description="Proton acceptor" evidence="1">
    <location>
        <position position="196"/>
    </location>
</feature>
<feature type="glycosylation site" description="N-linked (GlcNAc...) asparagine" evidence="3">
    <location>
        <position position="192"/>
    </location>
</feature>
<feature type="glycosylation site" description="N-linked (GlcNAc...) asparagine" evidence="3">
    <location>
        <position position="256"/>
    </location>
</feature>
<feature type="disulfide bond" evidence="2">
    <location>
        <begin position="297"/>
        <end position="327"/>
    </location>
</feature>
<feature type="disulfide bond" evidence="2">
    <location>
        <begin position="387"/>
        <end position="401"/>
    </location>
</feature>
<accession>Q9ER31</accession>